<accession>Q9KW13</accession>
<comment type="function">
    <text evidence="1">DNA-dependent RNA polymerase catalyzes the transcription of DNA into RNA using the four ribonucleoside triphosphates as substrates.</text>
</comment>
<comment type="catalytic activity">
    <reaction evidence="1">
        <text>RNA(n) + a ribonucleoside 5'-triphosphate = RNA(n+1) + diphosphate</text>
        <dbReference type="Rhea" id="RHEA:21248"/>
        <dbReference type="Rhea" id="RHEA-COMP:14527"/>
        <dbReference type="Rhea" id="RHEA-COMP:17342"/>
        <dbReference type="ChEBI" id="CHEBI:33019"/>
        <dbReference type="ChEBI" id="CHEBI:61557"/>
        <dbReference type="ChEBI" id="CHEBI:140395"/>
        <dbReference type="EC" id="2.7.7.6"/>
    </reaction>
</comment>
<comment type="cofactor">
    <cofactor evidence="1">
        <name>Mg(2+)</name>
        <dbReference type="ChEBI" id="CHEBI:18420"/>
    </cofactor>
    <text evidence="1">Binds 1 Mg(2+) ion per subunit.</text>
</comment>
<comment type="cofactor">
    <cofactor evidence="1">
        <name>Zn(2+)</name>
        <dbReference type="ChEBI" id="CHEBI:29105"/>
    </cofactor>
    <text evidence="1">Binds 2 Zn(2+) ions per subunit.</text>
</comment>
<comment type="subunit">
    <text evidence="1">The RNAP catalytic core consists of 2 alpha, 1 beta, 1 beta' and 1 omega subunit. When a sigma factor is associated with the core the holoenzyme is formed, which can initiate transcription.</text>
</comment>
<comment type="similarity">
    <text evidence="1">Belongs to the RNA polymerase beta' chain family.</text>
</comment>
<name>RPOC_SHEVI</name>
<evidence type="ECO:0000255" key="1">
    <source>
        <dbReference type="HAMAP-Rule" id="MF_01322"/>
    </source>
</evidence>
<sequence>MKDLLKFLKQQSKTEEFNGIKIGLASPDLIRSWSFGEVKKPETINYRTFKPEREGLFCARIFGPVKDYECLCGKYKRLKHRGVICEKCGVEVTQTKVRRERMGHIDLASPVAHIWFLKSLPSRIGLMLDMTLRDIERVLYFESFVVIEPGMTSLERGQMLTEESYLDALEEYGDEFEAKMGAEAVLELLRAIELEKEIESLREELPSINSETRRKKMTKRLKLIEAFFHSGNKPEWMILKVLPVLPPDLRPLVPLDGGRFATSDLNDLYRRVINRNNRLKRLLDLAAPDIIVRNEKRMLQESVDALLDNGRRGRAITGSNKRPLKSLADMIKGKQGRFRQNLLGKRVDYSGRSVITVGPTLRLHQCGLPKKMALELFKPFIYGKLEGRGLATTIKAAKKMVEREVPEVWDVLDDVIREHPVMLNRAPTLHRLGIQAFEPVLIEGKAIQLHPLVCAAYNADFDGDQMAVHVPLTLEAQLEARSLMMSTNNILSPANGEPVITPSQDVVLGLYYASRKCVNGKGEGMVFESIDEVEKAYRTGFAAIHAQVKVRITETHIAENGERTEARRIVDTTVGRSLLSRVLPKGLSFDLVNQNMGKKQIGKLLNTCYRQLGLKDTVVFADQLMYAGFHYATVSGASVGIDDMVIPAAKYTLVADAEAEVLEIQEQFQSGLVTAGERYNKVIDIWASANEKISKAMMDNLSVETVINRDGEEEEQESFNSIYMMADSGARGSAAQIRQLAGMRGLMAKPDGSIIETPIVANFREGLNVSQYFISTHGARKGLADTALKTANSGYLTRRLVDVAQDLVVIEDDCGTFEGLTMKPLIEGGDVVEPLRERVLGRVVALDVFYPGTEKVLAPRNTLLDEAWCDTLEDNSIDEVIVRSVISCNTDFGVCKACYGRDLARGHIINQGEAIGVVAAQSIGEPGTQLNGWRTFHIGGAASRASAENNVQVKNAGTVKLHNAKHVTNSEGKLVIVSRSSEVAIIDELGREKERYKVPYGTILEKLEESIVTAGEIIANWDPHTHPIISEVAGTIKFVDMIEGVTMTRQTDDLTGLSSIVVMEVGQRPTAGKEMRPSIRLLDASGEDLKIPGTEVPAQYFLPGKAIVNQDDNAEINVGDALARIPQESSKTRDITGGLPRVADLFEARKPKEPAILAEYSGTISFGKETKGKRRLLITPADGGKPYEEMIPKWRNLNVFEGEKVERGEVIADGAEAAHDILRLRGIHKVANYIVNEVQDVYRLQGVKINDKHIEVIIRQMLRKCLITDAGDSQFLAGEQAEVARVKIANRELEAQGKKPATFDRELLGITKASLATESFISAASFQETTRVLTEAAVGGKSDKLRGLKENVIVGRLIPAGTGYAYHQKRNAALAAKASGKTSEQATTITASEAERNLADLLNLAGSSD</sequence>
<keyword id="KW-0240">DNA-directed RNA polymerase</keyword>
<keyword id="KW-0460">Magnesium</keyword>
<keyword id="KW-0479">Metal-binding</keyword>
<keyword id="KW-0548">Nucleotidyltransferase</keyword>
<keyword id="KW-0804">Transcription</keyword>
<keyword id="KW-0808">Transferase</keyword>
<keyword id="KW-0862">Zinc</keyword>
<dbReference type="EC" id="2.7.7.6" evidence="1"/>
<dbReference type="EMBL" id="AB045725">
    <property type="protein sequence ID" value="BAA99393.1"/>
    <property type="molecule type" value="Genomic_DNA"/>
</dbReference>
<dbReference type="SMR" id="Q9KW13"/>
<dbReference type="GO" id="GO:0000428">
    <property type="term" value="C:DNA-directed RNA polymerase complex"/>
    <property type="evidence" value="ECO:0007669"/>
    <property type="project" value="UniProtKB-KW"/>
</dbReference>
<dbReference type="GO" id="GO:0003677">
    <property type="term" value="F:DNA binding"/>
    <property type="evidence" value="ECO:0007669"/>
    <property type="project" value="UniProtKB-UniRule"/>
</dbReference>
<dbReference type="GO" id="GO:0003899">
    <property type="term" value="F:DNA-directed RNA polymerase activity"/>
    <property type="evidence" value="ECO:0007669"/>
    <property type="project" value="UniProtKB-UniRule"/>
</dbReference>
<dbReference type="GO" id="GO:0000287">
    <property type="term" value="F:magnesium ion binding"/>
    <property type="evidence" value="ECO:0007669"/>
    <property type="project" value="UniProtKB-UniRule"/>
</dbReference>
<dbReference type="GO" id="GO:0008270">
    <property type="term" value="F:zinc ion binding"/>
    <property type="evidence" value="ECO:0007669"/>
    <property type="project" value="UniProtKB-UniRule"/>
</dbReference>
<dbReference type="GO" id="GO:0006351">
    <property type="term" value="P:DNA-templated transcription"/>
    <property type="evidence" value="ECO:0007669"/>
    <property type="project" value="UniProtKB-UniRule"/>
</dbReference>
<dbReference type="CDD" id="cd02655">
    <property type="entry name" value="RNAP_beta'_C"/>
    <property type="match status" value="1"/>
</dbReference>
<dbReference type="CDD" id="cd01609">
    <property type="entry name" value="RNAP_beta'_N"/>
    <property type="match status" value="1"/>
</dbReference>
<dbReference type="FunFam" id="1.10.132.30:FF:000003">
    <property type="entry name" value="DNA-directed RNA polymerase subunit beta"/>
    <property type="match status" value="1"/>
</dbReference>
<dbReference type="FunFam" id="1.10.150.390:FF:000002">
    <property type="entry name" value="DNA-directed RNA polymerase subunit beta"/>
    <property type="match status" value="1"/>
</dbReference>
<dbReference type="FunFam" id="1.10.40.90:FF:000001">
    <property type="entry name" value="DNA-directed RNA polymerase subunit beta"/>
    <property type="match status" value="1"/>
</dbReference>
<dbReference type="FunFam" id="4.10.860.120:FF:000001">
    <property type="entry name" value="DNA-directed RNA polymerase subunit beta"/>
    <property type="match status" value="1"/>
</dbReference>
<dbReference type="Gene3D" id="1.10.132.30">
    <property type="match status" value="1"/>
</dbReference>
<dbReference type="Gene3D" id="1.10.150.390">
    <property type="match status" value="1"/>
</dbReference>
<dbReference type="Gene3D" id="1.10.1790.20">
    <property type="match status" value="1"/>
</dbReference>
<dbReference type="Gene3D" id="1.10.40.90">
    <property type="match status" value="1"/>
</dbReference>
<dbReference type="Gene3D" id="2.40.40.20">
    <property type="match status" value="1"/>
</dbReference>
<dbReference type="Gene3D" id="2.40.50.100">
    <property type="match status" value="3"/>
</dbReference>
<dbReference type="Gene3D" id="4.10.860.120">
    <property type="entry name" value="RNA polymerase II, clamp domain"/>
    <property type="match status" value="1"/>
</dbReference>
<dbReference type="Gene3D" id="1.10.274.100">
    <property type="entry name" value="RNA polymerase Rpb1, domain 3"/>
    <property type="match status" value="1"/>
</dbReference>
<dbReference type="HAMAP" id="MF_01322">
    <property type="entry name" value="RNApol_bact_RpoC"/>
    <property type="match status" value="1"/>
</dbReference>
<dbReference type="InterPro" id="IPR045867">
    <property type="entry name" value="DNA-dir_RpoC_beta_prime"/>
</dbReference>
<dbReference type="InterPro" id="IPR012754">
    <property type="entry name" value="DNA-dir_RpoC_beta_prime_bact"/>
</dbReference>
<dbReference type="InterPro" id="IPR000722">
    <property type="entry name" value="RNA_pol_asu"/>
</dbReference>
<dbReference type="InterPro" id="IPR006592">
    <property type="entry name" value="RNA_pol_N"/>
</dbReference>
<dbReference type="InterPro" id="IPR007080">
    <property type="entry name" value="RNA_pol_Rpb1_1"/>
</dbReference>
<dbReference type="InterPro" id="IPR007066">
    <property type="entry name" value="RNA_pol_Rpb1_3"/>
</dbReference>
<dbReference type="InterPro" id="IPR042102">
    <property type="entry name" value="RNA_pol_Rpb1_3_sf"/>
</dbReference>
<dbReference type="InterPro" id="IPR007083">
    <property type="entry name" value="RNA_pol_Rpb1_4"/>
</dbReference>
<dbReference type="InterPro" id="IPR007081">
    <property type="entry name" value="RNA_pol_Rpb1_5"/>
</dbReference>
<dbReference type="InterPro" id="IPR044893">
    <property type="entry name" value="RNA_pol_Rpb1_clamp_domain"/>
</dbReference>
<dbReference type="InterPro" id="IPR038120">
    <property type="entry name" value="Rpb1_funnel_sf"/>
</dbReference>
<dbReference type="NCBIfam" id="TIGR02386">
    <property type="entry name" value="rpoC_TIGR"/>
    <property type="match status" value="1"/>
</dbReference>
<dbReference type="PANTHER" id="PTHR19376">
    <property type="entry name" value="DNA-DIRECTED RNA POLYMERASE"/>
    <property type="match status" value="1"/>
</dbReference>
<dbReference type="PANTHER" id="PTHR19376:SF54">
    <property type="entry name" value="DNA-DIRECTED RNA POLYMERASE SUBUNIT BETA"/>
    <property type="match status" value="1"/>
</dbReference>
<dbReference type="Pfam" id="PF04997">
    <property type="entry name" value="RNA_pol_Rpb1_1"/>
    <property type="match status" value="1"/>
</dbReference>
<dbReference type="Pfam" id="PF00623">
    <property type="entry name" value="RNA_pol_Rpb1_2"/>
    <property type="match status" value="2"/>
</dbReference>
<dbReference type="Pfam" id="PF04983">
    <property type="entry name" value="RNA_pol_Rpb1_3"/>
    <property type="match status" value="1"/>
</dbReference>
<dbReference type="Pfam" id="PF05000">
    <property type="entry name" value="RNA_pol_Rpb1_4"/>
    <property type="match status" value="1"/>
</dbReference>
<dbReference type="Pfam" id="PF04998">
    <property type="entry name" value="RNA_pol_Rpb1_5"/>
    <property type="match status" value="1"/>
</dbReference>
<dbReference type="SMART" id="SM00663">
    <property type="entry name" value="RPOLA_N"/>
    <property type="match status" value="1"/>
</dbReference>
<dbReference type="SUPFAM" id="SSF64484">
    <property type="entry name" value="beta and beta-prime subunits of DNA dependent RNA-polymerase"/>
    <property type="match status" value="1"/>
</dbReference>
<reference key="1">
    <citation type="submission" date="2000-07" db="EMBL/GenBank/DDBJ databases">
        <title>Isolation of rpoB and rpoC genes from deep-sea piezophilic bacterium Shewanella violacea and its overexpression in Escherichia coli.</title>
        <authorList>
            <person name="Nakasone K."/>
            <person name="Ikegami A."/>
            <person name="Sakai Y."/>
            <person name="Kato C."/>
            <person name="Horikoshi K."/>
        </authorList>
    </citation>
    <scope>NUCLEOTIDE SEQUENCE [GENOMIC DNA]</scope>
</reference>
<organism>
    <name type="scientific">Shewanella violacea</name>
    <dbReference type="NCBI Taxonomy" id="60217"/>
    <lineage>
        <taxon>Bacteria</taxon>
        <taxon>Pseudomonadati</taxon>
        <taxon>Pseudomonadota</taxon>
        <taxon>Gammaproteobacteria</taxon>
        <taxon>Alteromonadales</taxon>
        <taxon>Shewanellaceae</taxon>
        <taxon>Shewanella</taxon>
    </lineage>
</organism>
<proteinExistence type="inferred from homology"/>
<protein>
    <recommendedName>
        <fullName evidence="1">DNA-directed RNA polymerase subunit beta'</fullName>
        <shortName evidence="1">RNAP subunit beta'</shortName>
        <ecNumber evidence="1">2.7.7.6</ecNumber>
    </recommendedName>
    <alternativeName>
        <fullName evidence="1">RNA polymerase subunit beta'</fullName>
    </alternativeName>
    <alternativeName>
        <fullName evidence="1">Transcriptase subunit beta'</fullName>
    </alternativeName>
</protein>
<gene>
    <name evidence="1" type="primary">rpoC</name>
</gene>
<feature type="chain" id="PRO_0000067790" description="DNA-directed RNA polymerase subunit beta'">
    <location>
        <begin position="1"/>
        <end position="1409"/>
    </location>
</feature>
<feature type="binding site" evidence="1">
    <location>
        <position position="70"/>
    </location>
    <ligand>
        <name>Zn(2+)</name>
        <dbReference type="ChEBI" id="CHEBI:29105"/>
        <label>1</label>
    </ligand>
</feature>
<feature type="binding site" evidence="1">
    <location>
        <position position="72"/>
    </location>
    <ligand>
        <name>Zn(2+)</name>
        <dbReference type="ChEBI" id="CHEBI:29105"/>
        <label>1</label>
    </ligand>
</feature>
<feature type="binding site" evidence="1">
    <location>
        <position position="85"/>
    </location>
    <ligand>
        <name>Zn(2+)</name>
        <dbReference type="ChEBI" id="CHEBI:29105"/>
        <label>1</label>
    </ligand>
</feature>
<feature type="binding site" evidence="1">
    <location>
        <position position="88"/>
    </location>
    <ligand>
        <name>Zn(2+)</name>
        <dbReference type="ChEBI" id="CHEBI:29105"/>
        <label>1</label>
    </ligand>
</feature>
<feature type="binding site" evidence="1">
    <location>
        <position position="460"/>
    </location>
    <ligand>
        <name>Mg(2+)</name>
        <dbReference type="ChEBI" id="CHEBI:18420"/>
    </ligand>
</feature>
<feature type="binding site" evidence="1">
    <location>
        <position position="462"/>
    </location>
    <ligand>
        <name>Mg(2+)</name>
        <dbReference type="ChEBI" id="CHEBI:18420"/>
    </ligand>
</feature>
<feature type="binding site" evidence="1">
    <location>
        <position position="464"/>
    </location>
    <ligand>
        <name>Mg(2+)</name>
        <dbReference type="ChEBI" id="CHEBI:18420"/>
    </ligand>
</feature>
<feature type="binding site" evidence="1">
    <location>
        <position position="814"/>
    </location>
    <ligand>
        <name>Zn(2+)</name>
        <dbReference type="ChEBI" id="CHEBI:29105"/>
        <label>2</label>
    </ligand>
</feature>
<feature type="binding site" evidence="1">
    <location>
        <position position="888"/>
    </location>
    <ligand>
        <name>Zn(2+)</name>
        <dbReference type="ChEBI" id="CHEBI:29105"/>
        <label>2</label>
    </ligand>
</feature>
<feature type="binding site" evidence="1">
    <location>
        <position position="895"/>
    </location>
    <ligand>
        <name>Zn(2+)</name>
        <dbReference type="ChEBI" id="CHEBI:29105"/>
        <label>2</label>
    </ligand>
</feature>
<feature type="binding site" evidence="1">
    <location>
        <position position="898"/>
    </location>
    <ligand>
        <name>Zn(2+)</name>
        <dbReference type="ChEBI" id="CHEBI:29105"/>
        <label>2</label>
    </ligand>
</feature>